<feature type="chain" id="PRO_0000155461" description="Kunitz-type serine protease inhibitor RsTIS5">
    <location>
        <begin position="1"/>
        <end position="25" status="greater than"/>
    </location>
</feature>
<feature type="domain" description="BPTI/Kunitz inhibitor" evidence="2">
    <location>
        <begin position="1"/>
        <end position="25" status="greater than"/>
    </location>
</feature>
<feature type="site" description="Reactive bond" evidence="1">
    <location>
        <begin position="21"/>
        <end position="22"/>
    </location>
</feature>
<feature type="disulfide bond" evidence="1 2">
    <location>
        <begin position="11"/>
        <end status="unknown"/>
    </location>
</feature>
<feature type="disulfide bond" evidence="1 2">
    <location>
        <begin position="20"/>
        <end status="unknown"/>
    </location>
</feature>
<feature type="non-terminal residue" evidence="4">
    <location>
        <position position="25"/>
    </location>
</feature>
<comment type="function">
    <text evidence="3">Serine protease inhibitor. Inhibits trypsin, elastase and plasmin. Does not inhibit kallikrein.</text>
</comment>
<sequence length="25" mass="2792">EAEPKPFNPVCYEPKEVGPCKAYVP</sequence>
<dbReference type="GO" id="GO:0004867">
    <property type="term" value="F:serine-type endopeptidase inhibitor activity"/>
    <property type="evidence" value="ECO:0000314"/>
    <property type="project" value="UniProtKB"/>
</dbReference>
<evidence type="ECO:0000250" key="1">
    <source>
        <dbReference type="UniProtKB" id="P31713"/>
    </source>
</evidence>
<evidence type="ECO:0000255" key="2">
    <source>
        <dbReference type="PROSITE-ProRule" id="PRU00031"/>
    </source>
</evidence>
<evidence type="ECO:0000269" key="3">
    <source>
    </source>
</evidence>
<evidence type="ECO:0000303" key="4">
    <source>
    </source>
</evidence>
<evidence type="ECO:0000305" key="5"/>
<accession>P84556</accession>
<reference evidence="5" key="1">
    <citation type="journal article" date="2003" name="Arch. Biochem. Biophys.">
        <title>Rhipicephalus sanguineus trypsin inhibitors present in the tick larvae: isolation, characterization, and partial primary structure determination.</title>
        <authorList>
            <person name="Sant'Anna Azzolini S."/>
            <person name="Sasaki S.D."/>
            <person name="Torquato R.J.S."/>
            <person name="Andreotti R."/>
            <person name="Andreotti E."/>
            <person name="Tanaka A.S."/>
        </authorList>
    </citation>
    <scope>PROTEIN SEQUENCE</scope>
    <scope>FUNCTION</scope>
    <source>
        <tissue evidence="3">Larva</tissue>
    </source>
</reference>
<name>TIS5_RHISA</name>
<organism>
    <name type="scientific">Rhipicephalus sanguineus</name>
    <name type="common">Brown dog tick</name>
    <name type="synonym">Ixodes sanguineus</name>
    <dbReference type="NCBI Taxonomy" id="34632"/>
    <lineage>
        <taxon>Eukaryota</taxon>
        <taxon>Metazoa</taxon>
        <taxon>Ecdysozoa</taxon>
        <taxon>Arthropoda</taxon>
        <taxon>Chelicerata</taxon>
        <taxon>Arachnida</taxon>
        <taxon>Acari</taxon>
        <taxon>Parasitiformes</taxon>
        <taxon>Ixodida</taxon>
        <taxon>Ixodoidea</taxon>
        <taxon>Ixodidae</taxon>
        <taxon>Rhipicephalinae</taxon>
        <taxon>Rhipicephalus</taxon>
        <taxon>Rhipicephalus</taxon>
    </lineage>
</organism>
<proteinExistence type="evidence at protein level"/>
<keyword id="KW-0903">Direct protein sequencing</keyword>
<keyword id="KW-1015">Disulfide bond</keyword>
<keyword id="KW-0646">Protease inhibitor</keyword>
<keyword id="KW-0722">Serine protease inhibitor</keyword>
<protein>
    <recommendedName>
        <fullName>Kunitz-type serine protease inhibitor RsTIS5</fullName>
    </recommendedName>
</protein>